<proteinExistence type="inferred from homology"/>
<sequence>MRLYINEIKIKDDILYCYTEDSIKGLSEVGQMLVDSDNYAFAYTLDDGKAYAYLIFVQETWTMLHENMTKKIIINDELELTEFHQELTYILDNIKGNNNYGKEFVATVEETFDIE</sequence>
<protein>
    <recommendedName>
        <fullName evidence="1">UPF0738 protein NWMN_0875</fullName>
    </recommendedName>
</protein>
<dbReference type="EMBL" id="AP009351">
    <property type="protein sequence ID" value="BAF67147.1"/>
    <property type="molecule type" value="Genomic_DNA"/>
</dbReference>
<dbReference type="RefSeq" id="WP_001242102.1">
    <property type="nucleotide sequence ID" value="NZ_JBBIAE010000002.1"/>
</dbReference>
<dbReference type="KEGG" id="sae:NWMN_0875"/>
<dbReference type="HOGENOM" id="CLU_142282_0_0_9"/>
<dbReference type="Proteomes" id="UP000006386">
    <property type="component" value="Chromosome"/>
</dbReference>
<dbReference type="HAMAP" id="MF_01861">
    <property type="entry name" value="UPF0738"/>
    <property type="match status" value="1"/>
</dbReference>
<dbReference type="InterPro" id="IPR020908">
    <property type="entry name" value="UPF0738"/>
</dbReference>
<dbReference type="Pfam" id="PF19785">
    <property type="entry name" value="UPF0738"/>
    <property type="match status" value="1"/>
</dbReference>
<accession>A6QFL5</accession>
<name>Y875_STAAE</name>
<evidence type="ECO:0000255" key="1">
    <source>
        <dbReference type="HAMAP-Rule" id="MF_01861"/>
    </source>
</evidence>
<comment type="similarity">
    <text evidence="1">Belongs to the UPF0738 family.</text>
</comment>
<feature type="chain" id="PRO_0000369668" description="UPF0738 protein NWMN_0875">
    <location>
        <begin position="1"/>
        <end position="115"/>
    </location>
</feature>
<organism>
    <name type="scientific">Staphylococcus aureus (strain Newman)</name>
    <dbReference type="NCBI Taxonomy" id="426430"/>
    <lineage>
        <taxon>Bacteria</taxon>
        <taxon>Bacillati</taxon>
        <taxon>Bacillota</taxon>
        <taxon>Bacilli</taxon>
        <taxon>Bacillales</taxon>
        <taxon>Staphylococcaceae</taxon>
        <taxon>Staphylococcus</taxon>
    </lineage>
</organism>
<reference key="1">
    <citation type="journal article" date="2008" name="J. Bacteriol.">
        <title>Genome sequence of Staphylococcus aureus strain Newman and comparative analysis of staphylococcal genomes: polymorphism and evolution of two major pathogenicity islands.</title>
        <authorList>
            <person name="Baba T."/>
            <person name="Bae T."/>
            <person name="Schneewind O."/>
            <person name="Takeuchi F."/>
            <person name="Hiramatsu K."/>
        </authorList>
    </citation>
    <scope>NUCLEOTIDE SEQUENCE [LARGE SCALE GENOMIC DNA]</scope>
    <source>
        <strain>Newman</strain>
    </source>
</reference>
<gene>
    <name type="ordered locus">NWMN_0875</name>
</gene>